<reference evidence="9" key="1">
    <citation type="journal article" date="2016" name="Angew. Chem. Int. Ed. Engl.">
        <title>A unique tryptophan C-prenyltransferase from the kawaguchipeptin biosynthetic pathway.</title>
        <authorList>
            <person name="Parajuli A."/>
            <person name="Kwak D.H."/>
            <person name="Dalponte L."/>
            <person name="Leikoski N."/>
            <person name="Galica T."/>
            <person name="Umeobika U."/>
            <person name="Trembleau L."/>
            <person name="Bent A."/>
            <person name="Sivonen K."/>
            <person name="Wahlsten M."/>
            <person name="Wang H."/>
            <person name="Rizzi E."/>
            <person name="De Bellis G."/>
            <person name="Naismith J."/>
            <person name="Jaspars M."/>
            <person name="Liu X."/>
            <person name="Houssen W."/>
            <person name="Fewer D.P."/>
        </authorList>
    </citation>
    <scope>NUCLEOTIDE SEQUENCE [LARGE SCALE GENOMIC DNA]</scope>
    <scope>EXPRESSION IN E.COLI</scope>
    <scope>MASS SPECTROMETRY</scope>
    <source>
        <strain>NIES-88 / KW-MA1-3</strain>
    </source>
</reference>
<reference key="2">
    <citation type="journal article" date="2017" name="Angew. Chem. Int. Ed.">
        <title>Corrigendum: a unique tryptophan C-prenyltransferase from the kawaguchipeptin biosynthetic pathway.</title>
        <authorList>
            <person name="Parajuli A."/>
            <person name="Kwak D.H."/>
            <person name="Dalponte L."/>
            <person name="Leikoski N."/>
            <person name="Galica T."/>
            <person name="Umeobika U."/>
            <person name="Trembleau L."/>
            <person name="Bent A."/>
            <person name="Sivonen K."/>
            <person name="Wahlsten M."/>
            <person name="Wang H."/>
            <person name="Rizzi E."/>
            <person name="De Bellis G."/>
            <person name="Naismith J."/>
            <person name="Jaspars M."/>
            <person name="Liu X."/>
            <person name="Houssen W."/>
            <person name="Fewer D.P."/>
        </authorList>
    </citation>
    <scope>ERRATUM OF PUBMED:26846478</scope>
</reference>
<reference key="3">
    <citation type="journal article" date="1996" name="Tetrahedron">
        <title>Kawaguchipeptin A, a novel cyclic undecapeptide from cyanobacterium Microcystis aeruginosa (NIES-88).</title>
        <authorList>
            <person name="Ishida K."/>
            <person name="Matsuda H."/>
            <person name="Murakami M."/>
            <person name="Yamaguchi K."/>
        </authorList>
    </citation>
    <scope>NMR SPECTROSCOPY OF 34-44; 52-62 AND 70-80</scope>
    <scope>MASS SPECTROMETRY</scope>
    <scope>PRENYLATION AT TRP-34; TRP-41; TRP-52; TRP-59; TRP-70 AND TRP-77</scope>
    <scope>D-AMINO ACID AT LEU-35; LEU-53 AND LEU-71</scope>
    <source>
        <strain>NIES-88 / KW-MA1-3</strain>
    </source>
</reference>
<reference key="4">
    <citation type="journal article" date="1997" name="J. Nat. Prod.">
        <title>Kawaguchipeptin B, an antibacterial cyclic undecapeptide from the cyanobacterium Microcystis aeruginosa.</title>
        <authorList>
            <person name="Ishida K."/>
            <person name="Matsuda H."/>
            <person name="Murakami M."/>
            <person name="Yamaguchi K."/>
        </authorList>
    </citation>
    <scope>NMR SPECTROSCOPY OF 34-44; 52-62 AND 70-80</scope>
    <scope>ABSENCE OF PTM</scope>
    <scope>FUNCTION</scope>
    <source>
        <strain>NIES-88 / KW-MA1-3</strain>
    </source>
</reference>
<gene>
    <name evidence="4 9" type="primary">kgpE</name>
    <name evidence="9" type="ORF">OA58_19045</name>
</gene>
<dbReference type="EMBL" id="JXYX01000010">
    <property type="protein sequence ID" value="KXS89845.1"/>
    <property type="molecule type" value="Genomic_DNA"/>
</dbReference>
<dbReference type="RefSeq" id="WP_061432710.1">
    <property type="nucleotide sequence ID" value="NZ_JXYX01000010.1"/>
</dbReference>
<dbReference type="GeneID" id="66708215"/>
<dbReference type="PATRIC" id="fig|449441.3.peg.1809"/>
<dbReference type="GO" id="GO:0042742">
    <property type="term" value="P:defense response to bacterium"/>
    <property type="evidence" value="ECO:0007669"/>
    <property type="project" value="UniProtKB-KW"/>
</dbReference>
<protein>
    <recommendedName>
        <fullName evidence="4">Kawaguchipeptin peptide</fullName>
    </recommendedName>
    <alternativeName>
        <fullName evidence="4">Cyclic cyanobactin</fullName>
    </alternativeName>
    <component>
        <recommendedName>
            <fullName evidence="6">Kawaguchipeptin A</fullName>
        </recommendedName>
        <alternativeName>
            <fullName evidence="4 5">Non-posttranslationaly modified kawaguchipeptin B</fullName>
        </alternativeName>
    </component>
</protein>
<keyword id="KW-0044">Antibiotic</keyword>
<keyword id="KW-0929">Antimicrobial</keyword>
<keyword id="KW-0208">D-amino acid</keyword>
<keyword id="KW-0449">Lipoprotein</keyword>
<keyword id="KW-0636">Prenylation</keyword>
<name>KAWA_MICA8</name>
<accession>A0A139GI49</accession>
<sequence>MKNPTLLPKLTAPVERPAVTSSDLKQASSVDAAWLNGDNNWSTPFAGVNAAWLNGDNNWSTPFAGVNAAWLNGDNNWSTPFAADGAE</sequence>
<evidence type="ECO:0000269" key="1">
    <source>
    </source>
</evidence>
<evidence type="ECO:0000269" key="2">
    <source>
    </source>
</evidence>
<evidence type="ECO:0000269" key="3">
    <source ref="3"/>
</evidence>
<evidence type="ECO:0000303" key="4">
    <source>
    </source>
</evidence>
<evidence type="ECO:0000303" key="5">
    <source>
    </source>
</evidence>
<evidence type="ECO:0000303" key="6">
    <source ref="3"/>
</evidence>
<evidence type="ECO:0000305" key="7">
    <source>
    </source>
</evidence>
<evidence type="ECO:0000305" key="8">
    <source ref="3"/>
</evidence>
<evidence type="ECO:0000312" key="9">
    <source>
        <dbReference type="EMBL" id="KXS89845.1"/>
    </source>
</evidence>
<comment type="function">
    <text evidence="2">Both kawaguchipeptin A and B, which only differ by post-translational modifications, have antibacterial activities, since they inhibit the growth of the Gram-positive bacterium S.aureus at a concentration of 1 ug/mL.</text>
</comment>
<comment type="PTM">
    <text evidence="2 3">Kawaguchipeptin A contains a D-Leu and 2 prenylated Trp, whereas kawaguchipeptin B only contains unmodified amino acids.</text>
</comment>
<comment type="PTM">
    <text evidence="1 3">Kawaguchipeptin A is prenylated in vivo (Ref.3). Upon expression in E.coli of the whole operon, Trp residues are prenylated by C-prenyltransferase KgpF (PubMed:26846478). Prenylation by KgpF is likely the last enzymatic step in the biosynthetic maturation of kawaguchipeptin A (PubMed:26846478).</text>
</comment>
<comment type="mass spectrometry">
    <text>Kawaguchipeptin A (with D-Leu and prenylated Trp), in vivo.</text>
</comment>
<comment type="mass spectrometry">
    <text>Kawaguchipeptin A (with D-Leu and prenylated Trp), when expressed in E.coli.</text>
</comment>
<comment type="mass spectrometry">
    <text>Kawaguchipeptin B (unmodified), when expressed in E.coli.</text>
</comment>
<comment type="miscellaneous">
    <text evidence="8">This peptide comes from bacteria isolated from a broom on Kawaguchi lake, hence its name.</text>
</comment>
<feature type="propeptide" id="PRO_0000450456" evidence="7">
    <location>
        <begin position="1"/>
        <end position="33"/>
    </location>
</feature>
<feature type="peptide" id="PRO_0000450457" description="Kawaguchipeptin A" evidence="3">
    <location>
        <begin position="34"/>
        <end position="44"/>
    </location>
</feature>
<feature type="propeptide" id="PRO_0000450458" evidence="7">
    <location>
        <begin position="45"/>
        <end position="51"/>
    </location>
</feature>
<feature type="peptide" id="PRO_0000450459" description="Kawaguchipeptin A" evidence="3">
    <location>
        <begin position="52"/>
        <end position="62"/>
    </location>
</feature>
<feature type="propeptide" id="PRO_0000450460" evidence="7">
    <location>
        <begin position="63"/>
        <end position="69"/>
    </location>
</feature>
<feature type="peptide" id="PRO_0000450461" description="Kawaguchipeptin A" evidence="3">
    <location>
        <begin position="70"/>
        <end position="80"/>
    </location>
</feature>
<feature type="propeptide" id="PRO_0000450462" evidence="7">
    <location>
        <begin position="81"/>
        <end position="87"/>
    </location>
</feature>
<feature type="modified residue" description="D-leucine; partial" evidence="3">
    <location>
        <position position="35"/>
    </location>
</feature>
<feature type="modified residue" description="D-leucine; partial" evidence="3">
    <location>
        <position position="53"/>
    </location>
</feature>
<feature type="modified residue" description="D-leucine; partial" evidence="3">
    <location>
        <position position="71"/>
    </location>
</feature>
<feature type="lipid moiety-binding region" description="3'-prenyl-2',N2-cyclotryptophan; partial" evidence="3">
    <location>
        <position position="34"/>
    </location>
</feature>
<feature type="lipid moiety-binding region" description="3'-prenyl-2',N2-cyclotryptophan; partial" evidence="3">
    <location>
        <position position="41"/>
    </location>
</feature>
<feature type="lipid moiety-binding region" description="3'-prenyl-2',N2-cyclotryptophan; partial" evidence="3">
    <location>
        <position position="52"/>
    </location>
</feature>
<feature type="lipid moiety-binding region" description="3'-prenyl-2',N2-cyclotryptophan; partial" evidence="3">
    <location>
        <position position="59"/>
    </location>
</feature>
<feature type="lipid moiety-binding region" description="3'-prenyl-2',N2-cyclotryptophan; partial" evidence="3">
    <location>
        <position position="70"/>
    </location>
</feature>
<feature type="lipid moiety-binding region" description="3'-prenyl-2',N2-cyclotryptophan; partial" evidence="3">
    <location>
        <position position="77"/>
    </location>
</feature>
<feature type="cross-link" description="Cyclopeptide (Trp-Pro)" evidence="3">
    <location>
        <begin position="34"/>
        <end position="44"/>
    </location>
</feature>
<feature type="cross-link" description="Cyclopeptide (Trp-Pro)" evidence="3">
    <location>
        <begin position="52"/>
        <end position="62"/>
    </location>
</feature>
<feature type="cross-link" description="Cyclopeptide (Trp-Pro)" evidence="3">
    <location>
        <begin position="70"/>
        <end position="80"/>
    </location>
</feature>
<proteinExistence type="evidence at protein level"/>
<organism>
    <name type="scientific">Microcystis aeruginosa (strain NIES-88 / KW-MA1-3)</name>
    <dbReference type="NCBI Taxonomy" id="449441"/>
    <lineage>
        <taxon>Bacteria</taxon>
        <taxon>Bacillati</taxon>
        <taxon>Cyanobacteriota</taxon>
        <taxon>Cyanophyceae</taxon>
        <taxon>Oscillatoriophycideae</taxon>
        <taxon>Chroococcales</taxon>
        <taxon>Microcystaceae</taxon>
        <taxon>Microcystis</taxon>
    </lineage>
</organism>